<keyword id="KW-1003">Cell membrane</keyword>
<keyword id="KW-0256">Endoplasmic reticulum</keyword>
<keyword id="KW-0472">Membrane</keyword>
<keyword id="KW-0597">Phosphoprotein</keyword>
<keyword id="KW-1185">Reference proteome</keyword>
<keyword id="KW-0677">Repeat</keyword>
<keyword id="KW-0703">Sarcoplasmic reticulum</keyword>
<keyword id="KW-0812">Transmembrane</keyword>
<keyword id="KW-1133">Transmembrane helix</keyword>
<gene>
    <name type="primary">Jph1</name>
    <name type="synonym">Jp1</name>
</gene>
<proteinExistence type="evidence at protein level"/>
<organism>
    <name type="scientific">Mus musculus</name>
    <name type="common">Mouse</name>
    <dbReference type="NCBI Taxonomy" id="10090"/>
    <lineage>
        <taxon>Eukaryota</taxon>
        <taxon>Metazoa</taxon>
        <taxon>Chordata</taxon>
        <taxon>Craniata</taxon>
        <taxon>Vertebrata</taxon>
        <taxon>Euteleostomi</taxon>
        <taxon>Mammalia</taxon>
        <taxon>Eutheria</taxon>
        <taxon>Euarchontoglires</taxon>
        <taxon>Glires</taxon>
        <taxon>Rodentia</taxon>
        <taxon>Myomorpha</taxon>
        <taxon>Muroidea</taxon>
        <taxon>Muridae</taxon>
        <taxon>Murinae</taxon>
        <taxon>Mus</taxon>
        <taxon>Mus</taxon>
    </lineage>
</organism>
<dbReference type="EMBL" id="AB024445">
    <property type="protein sequence ID" value="BAB12043.1"/>
    <property type="molecule type" value="mRNA"/>
</dbReference>
<dbReference type="EMBL" id="AB024446">
    <property type="protein sequence ID" value="BAB20319.1"/>
    <property type="molecule type" value="Genomic_DNA"/>
</dbReference>
<dbReference type="EMBL" id="BC120839">
    <property type="protein sequence ID" value="AAI20840.1"/>
    <property type="molecule type" value="mRNA"/>
</dbReference>
<dbReference type="EMBL" id="BC137669">
    <property type="protein sequence ID" value="AAI37670.1"/>
    <property type="molecule type" value="mRNA"/>
</dbReference>
<dbReference type="CCDS" id="CCDS14833.1"/>
<dbReference type="RefSeq" id="NP_065629.1">
    <property type="nucleotide sequence ID" value="NM_020604.2"/>
</dbReference>
<dbReference type="RefSeq" id="XP_011236698.1">
    <property type="nucleotide sequence ID" value="XM_011238396.4"/>
</dbReference>
<dbReference type="RefSeq" id="XP_011236699.1">
    <property type="nucleotide sequence ID" value="XM_011238397.2"/>
</dbReference>
<dbReference type="RefSeq" id="XP_011236700.1">
    <property type="nucleotide sequence ID" value="XM_011238398.4"/>
</dbReference>
<dbReference type="RefSeq" id="XP_011236701.1">
    <property type="nucleotide sequence ID" value="XM_011238399.2"/>
</dbReference>
<dbReference type="SMR" id="Q9ET80"/>
<dbReference type="FunCoup" id="Q9ET80">
    <property type="interactions" value="574"/>
</dbReference>
<dbReference type="IntAct" id="Q9ET80">
    <property type="interactions" value="1"/>
</dbReference>
<dbReference type="STRING" id="10090.ENSMUSP00000039072"/>
<dbReference type="iPTMnet" id="Q9ET80"/>
<dbReference type="PhosphoSitePlus" id="Q9ET80"/>
<dbReference type="SwissPalm" id="Q9ET80"/>
<dbReference type="jPOST" id="Q9ET80"/>
<dbReference type="PaxDb" id="10090-ENSMUSP00000039072"/>
<dbReference type="PeptideAtlas" id="Q9ET80"/>
<dbReference type="ProteomicsDB" id="301700"/>
<dbReference type="Antibodypedia" id="2291">
    <property type="antibodies" value="153 antibodies from 28 providers"/>
</dbReference>
<dbReference type="DNASU" id="57339"/>
<dbReference type="Ensembl" id="ENSMUST00000038382.5">
    <property type="protein sequence ID" value="ENSMUSP00000039072.5"/>
    <property type="gene ID" value="ENSMUSG00000042686.6"/>
</dbReference>
<dbReference type="GeneID" id="57339"/>
<dbReference type="KEGG" id="mmu:57339"/>
<dbReference type="UCSC" id="uc007aka.2">
    <property type="organism name" value="mouse"/>
</dbReference>
<dbReference type="AGR" id="MGI:1891495"/>
<dbReference type="CTD" id="56704"/>
<dbReference type="MGI" id="MGI:1891495">
    <property type="gene designation" value="Jph1"/>
</dbReference>
<dbReference type="VEuPathDB" id="HostDB:ENSMUSG00000042686"/>
<dbReference type="eggNOG" id="KOG0231">
    <property type="taxonomic scope" value="Eukaryota"/>
</dbReference>
<dbReference type="GeneTree" id="ENSGT00940000156130"/>
<dbReference type="HOGENOM" id="CLU_008078_1_0_1"/>
<dbReference type="InParanoid" id="Q9ET80"/>
<dbReference type="OMA" id="NQDKRSA"/>
<dbReference type="OrthoDB" id="284854at2759"/>
<dbReference type="PhylomeDB" id="Q9ET80"/>
<dbReference type="TreeFam" id="TF317210"/>
<dbReference type="BioGRID-ORCS" id="57339">
    <property type="hits" value="2 hits in 77 CRISPR screens"/>
</dbReference>
<dbReference type="PRO" id="PR:Q9ET80"/>
<dbReference type="Proteomes" id="UP000000589">
    <property type="component" value="Chromosome 1"/>
</dbReference>
<dbReference type="RNAct" id="Q9ET80">
    <property type="molecule type" value="protein"/>
</dbReference>
<dbReference type="Bgee" id="ENSMUSG00000042686">
    <property type="expression patterns" value="Expressed in triceps brachii and 197 other cell types or tissues"/>
</dbReference>
<dbReference type="ExpressionAtlas" id="Q9ET80">
    <property type="expression patterns" value="baseline and differential"/>
</dbReference>
<dbReference type="GO" id="GO:0005783">
    <property type="term" value="C:endoplasmic reticulum"/>
    <property type="evidence" value="ECO:0000314"/>
    <property type="project" value="UniProtKB"/>
</dbReference>
<dbReference type="GO" id="GO:0005789">
    <property type="term" value="C:endoplasmic reticulum membrane"/>
    <property type="evidence" value="ECO:0000314"/>
    <property type="project" value="UniProtKB"/>
</dbReference>
<dbReference type="GO" id="GO:0030314">
    <property type="term" value="C:junctional membrane complex"/>
    <property type="evidence" value="ECO:0000314"/>
    <property type="project" value="UniProtKB"/>
</dbReference>
<dbReference type="GO" id="GO:0014701">
    <property type="term" value="C:junctional sarcoplasmic reticulum membrane"/>
    <property type="evidence" value="ECO:0000314"/>
    <property type="project" value="UniProtKB"/>
</dbReference>
<dbReference type="GO" id="GO:0005654">
    <property type="term" value="C:nucleoplasm"/>
    <property type="evidence" value="ECO:0007669"/>
    <property type="project" value="Ensembl"/>
</dbReference>
<dbReference type="GO" id="GO:0005886">
    <property type="term" value="C:plasma membrane"/>
    <property type="evidence" value="ECO:0000314"/>
    <property type="project" value="UniProtKB"/>
</dbReference>
<dbReference type="GO" id="GO:0016529">
    <property type="term" value="C:sarcoplasmic reticulum"/>
    <property type="evidence" value="ECO:0000314"/>
    <property type="project" value="UniProtKB"/>
</dbReference>
<dbReference type="GO" id="GO:0030018">
    <property type="term" value="C:Z disc"/>
    <property type="evidence" value="ECO:0000314"/>
    <property type="project" value="MGI"/>
</dbReference>
<dbReference type="GO" id="GO:0008307">
    <property type="term" value="F:structural constituent of muscle"/>
    <property type="evidence" value="ECO:0000315"/>
    <property type="project" value="UniProtKB"/>
</dbReference>
<dbReference type="GO" id="GO:0007517">
    <property type="term" value="P:muscle organ development"/>
    <property type="evidence" value="ECO:0000315"/>
    <property type="project" value="MGI"/>
</dbReference>
<dbReference type="FunFam" id="2.20.110.10:FF:000001">
    <property type="entry name" value="Junctophilin"/>
    <property type="match status" value="1"/>
</dbReference>
<dbReference type="FunFam" id="2.20.110.10:FF:000003">
    <property type="entry name" value="Junctophilin"/>
    <property type="match status" value="1"/>
</dbReference>
<dbReference type="FunFam" id="2.20.110.10:FF:000012">
    <property type="entry name" value="Junctophilin"/>
    <property type="match status" value="1"/>
</dbReference>
<dbReference type="Gene3D" id="2.20.110.10">
    <property type="entry name" value="Histone H3 K4-specific methyltransferase SET7/9 N-terminal domain"/>
    <property type="match status" value="3"/>
</dbReference>
<dbReference type="InterPro" id="IPR017191">
    <property type="entry name" value="Junctophilin"/>
</dbReference>
<dbReference type="InterPro" id="IPR003409">
    <property type="entry name" value="MORN"/>
</dbReference>
<dbReference type="PANTHER" id="PTHR23085">
    <property type="entry name" value="GH28348P"/>
    <property type="match status" value="1"/>
</dbReference>
<dbReference type="PANTHER" id="PTHR23085:SF6">
    <property type="entry name" value="JUNCTOPHILIN-1"/>
    <property type="match status" value="1"/>
</dbReference>
<dbReference type="Pfam" id="PF02493">
    <property type="entry name" value="MORN"/>
    <property type="match status" value="8"/>
</dbReference>
<dbReference type="PIRSF" id="PIRSF037387">
    <property type="entry name" value="Junctophilin"/>
    <property type="match status" value="1"/>
</dbReference>
<dbReference type="SMART" id="SM00698">
    <property type="entry name" value="MORN"/>
    <property type="match status" value="7"/>
</dbReference>
<dbReference type="SUPFAM" id="SSF82185">
    <property type="entry name" value="Histone H3 K4-specific methyltransferase SET7/9 N-terminal domain"/>
    <property type="match status" value="2"/>
</dbReference>
<evidence type="ECO:0000250" key="1"/>
<evidence type="ECO:0000250" key="2">
    <source>
        <dbReference type="UniProtKB" id="Q9HDC5"/>
    </source>
</evidence>
<evidence type="ECO:0000255" key="3"/>
<evidence type="ECO:0000256" key="4">
    <source>
        <dbReference type="SAM" id="MobiDB-lite"/>
    </source>
</evidence>
<evidence type="ECO:0000269" key="5">
    <source>
    </source>
</evidence>
<evidence type="ECO:0000269" key="6">
    <source>
    </source>
</evidence>
<evidence type="ECO:0000269" key="7">
    <source>
    </source>
</evidence>
<evidence type="ECO:0000269" key="8">
    <source>
    </source>
</evidence>
<evidence type="ECO:0000305" key="9"/>
<comment type="function">
    <text evidence="6 7 8">Junctophilins contribute to the formation of junctional membrane complexes (JMCs) which link the plasma membrane with the endoplasmic or sarcoplasmic reticulum in excitable cells. Provides a structural foundation for functional cross-talk between the cell surface and intracellular calcium release channels. JPH1 contributes to the construction of the skeletal muscle triad by linking the t-tubule (transverse-tubule) and SR (sarcoplasmic reticulum) membranes.</text>
</comment>
<comment type="subcellular location">
    <subcellularLocation>
        <location>Cell membrane</location>
        <topology>Peripheral membrane protein</topology>
    </subcellularLocation>
    <subcellularLocation>
        <location>Endoplasmic reticulum membrane</location>
        <topology>Single-pass type IV membrane protein</topology>
    </subcellularLocation>
    <subcellularLocation>
        <location>Sarcoplasmic reticulum membrane</location>
        <topology>Single-pass type IV membrane protein</topology>
    </subcellularLocation>
    <text>Predominantly on the plasma membrane. The transmembrane domain is anchored in endoplasmic/sarcoplasmic reticulum membrane, while the N-terminal part associates with the plasma membrane. In skeletal muscle cells, it is predominantly localized at the junction of the A and I bands.</text>
</comment>
<comment type="tissue specificity">
    <text evidence="5 6">Specifically expressed in skeletal muscle. Weakly expressed in embryos and neonates. Abundant in young adult muscles.</text>
</comment>
<comment type="domain">
    <text evidence="1">The MORN (membrane occupation and recognition nexus) repeats contribute to the plasma membrane binding, possibly by interacting with phospholipids.</text>
</comment>
<comment type="disruption phenotype">
    <text evidence="6 7">Mice are unable to suckle probably due to defective E-C coupling in jaw muscles, and die shortly after birth. In skeletal muscles, triad junctions are reduced in number. Mutant mice developed less contractile force and abnormal sensitivities to extracellular Ca(2+) were observed. Sarcoplasmic reticulum is often structurally abnormal.</text>
</comment>
<comment type="similarity">
    <text evidence="9">Belongs to the junctophilin family.</text>
</comment>
<sequence length="660" mass="71905">MTGGRFDFDDGGTYCGGWEEGKAHGHGICTGPKGQGEYSGSWSHGFEVVGVYTWPSGNTYQGYWAQGKRHGLGVETKGKWMYRGEWSHGFKGRYGVRQSLCTPARYEGTWSNGLQDGYGVETYGDGGTYQGQWAGGMRHGYGVRQSVPYGMATVIRSPLRTSLASLRSEQSNGSVLHEAAAAAADSPAGTRGGFVLNFHADTELGKKKGGLFRRGSLLGSMKLRKSESKSSISSKRSSVRSDAAMSRISSSDANSTISFGDVDCDFCPVEDHVDATTTETYMGEWKNDKRNGFGISERSNGMKYEGEWANNKRHGYGCTVFPDGSKEEGKYKNNILVRGIRKQLIPIRNTKTREKVDRAIEGAQRAAAMARTKVEIANSRTAHARAKADAADQAALAARQECDIARAVARELSPDFYQPGPDYIKQRCQEGGDIKENPEEKVLEKPPSPKESPHFYRKGTTPPRSPESSPKQSHSPQPSSPEPSKKQNPSPGARLSQDKQSLAEEQVTAFVNKPSMSKAPAKELGASVSKYSGRHHVPNPSNGELHSQYHGYYVKLNTPQHPPEDREDDRGVSQSSSALVPRPSPNKWGPPKSVTKPVAKESKTEPKAKKSELAIPKNPASNDTCPSLEKEANSGPNSIMIVLVMLLNIGLAILFVHFLT</sequence>
<reference key="1">
    <citation type="journal article" date="2000" name="Mol. Cell">
        <title>Junctophilins: a novel family of junctional membrane complex proteins.</title>
        <authorList>
            <person name="Takeshima H."/>
            <person name="Komazaki S."/>
            <person name="Nishi M."/>
            <person name="Iino M."/>
            <person name="Kangawa K."/>
        </authorList>
    </citation>
    <scope>NUCLEOTIDE SEQUENCE [GENOMIC DNA / MRNA]</scope>
    <scope>TISSUE SPECIFICITY</scope>
    <source>
        <strain>129</strain>
        <strain>C57BL/6J</strain>
        <tissue>Skeletal muscle</tissue>
    </source>
</reference>
<reference key="2">
    <citation type="journal article" date="2004" name="Genome Res.">
        <title>The status, quality, and expansion of the NIH full-length cDNA project: the Mammalian Gene Collection (MGC).</title>
        <authorList>
            <consortium name="The MGC Project Team"/>
        </authorList>
    </citation>
    <scope>NUCLEOTIDE SEQUENCE [LARGE SCALE MRNA]</scope>
    <source>
        <tissue>Brain</tissue>
    </source>
</reference>
<reference key="3">
    <citation type="journal article" date="2001" name="J. Cell Biol.">
        <title>Deficiency of triad junction and contraction in mutant skeletal muscle lacking junctophilin type 1.</title>
        <authorList>
            <person name="Ito K."/>
            <person name="Komazaki S."/>
            <person name="Sasamoto K."/>
            <person name="Yoshida M."/>
            <person name="Nishi M."/>
            <person name="Kitamura K."/>
            <person name="Takeshima H."/>
        </authorList>
    </citation>
    <scope>FUNCTION</scope>
    <scope>DISRUPTION PHENOTYPE</scope>
    <scope>SUBCELLULAR LOCATION</scope>
    <scope>TISSUE SPECIFICITY</scope>
</reference>
<reference key="4">
    <citation type="journal article" date="2002" name="FEBS Lett.">
        <title>Deficiency of triad formation in developing skeletal muscle cells lacking junctophilin type 1.</title>
        <authorList>
            <person name="Komazaki S."/>
            <person name="Ito K."/>
            <person name="Takeshima H."/>
            <person name="Nakamura H."/>
        </authorList>
    </citation>
    <scope>FUNCTION</scope>
    <scope>DISRUPTION PHENOTYPE</scope>
</reference>
<reference key="5">
    <citation type="journal article" date="2003" name="FEBS Lett.">
        <title>Abnormal junctional membrane structures in cardiac myocytes expressing ectopic junctophilin type 1.</title>
        <authorList>
            <person name="Komazaki S."/>
            <person name="Nishi M."/>
            <person name="Takeshima H."/>
        </authorList>
    </citation>
    <scope>SUBCELLULAR LOCATION</scope>
    <scope>FUNCTION</scope>
</reference>
<reference key="6">
    <citation type="journal article" date="2010" name="Cell">
        <title>A tissue-specific atlas of mouse protein phosphorylation and expression.</title>
        <authorList>
            <person name="Huttlin E.L."/>
            <person name="Jedrychowski M.P."/>
            <person name="Elias J.E."/>
            <person name="Goswami T."/>
            <person name="Rad R."/>
            <person name="Beausoleil S.A."/>
            <person name="Villen J."/>
            <person name="Haas W."/>
            <person name="Sowa M.E."/>
            <person name="Gygi S.P."/>
        </authorList>
    </citation>
    <scope>IDENTIFICATION BY MASS SPECTROMETRY [LARGE SCALE ANALYSIS]</scope>
    <source>
        <tissue>Heart</tissue>
    </source>
</reference>
<name>JPH1_MOUSE</name>
<protein>
    <recommendedName>
        <fullName>Junctophilin-1</fullName>
        <shortName>JP-1</shortName>
    </recommendedName>
    <alternativeName>
        <fullName>Junctophilin type 1</fullName>
    </alternativeName>
</protein>
<accession>Q9ET80</accession>
<accession>Q0VB08</accession>
<accession>Q9EQZ3</accession>
<feature type="chain" id="PRO_0000159845" description="Junctophilin-1">
    <location>
        <begin position="1"/>
        <end position="660"/>
    </location>
</feature>
<feature type="topological domain" description="Cytoplasmic" evidence="3">
    <location>
        <begin position="1"/>
        <end position="638"/>
    </location>
</feature>
<feature type="transmembrane region" description="Helical; Anchor for type IV membrane protein" evidence="3">
    <location>
        <begin position="639"/>
        <end position="659"/>
    </location>
</feature>
<feature type="repeat" description="MORN 1">
    <location>
        <begin position="14"/>
        <end position="36"/>
    </location>
</feature>
<feature type="repeat" description="MORN 2">
    <location>
        <begin position="38"/>
        <end position="59"/>
    </location>
</feature>
<feature type="repeat" description="MORN 3">
    <location>
        <begin position="60"/>
        <end position="82"/>
    </location>
</feature>
<feature type="repeat" description="MORN 4">
    <location>
        <begin position="106"/>
        <end position="128"/>
    </location>
</feature>
<feature type="repeat" description="MORN 5">
    <location>
        <begin position="129"/>
        <end position="151"/>
    </location>
</feature>
<feature type="repeat" description="MORN 6">
    <location>
        <begin position="281"/>
        <end position="303"/>
    </location>
</feature>
<feature type="repeat" description="MORN 7">
    <location>
        <begin position="304"/>
        <end position="326"/>
    </location>
</feature>
<feature type="region of interest" description="Disordered" evidence="4">
    <location>
        <begin position="228"/>
        <end position="247"/>
    </location>
</feature>
<feature type="region of interest" description="Disordered" evidence="4">
    <location>
        <begin position="437"/>
        <end position="631"/>
    </location>
</feature>
<feature type="compositionally biased region" description="Basic and acidic residues" evidence="4">
    <location>
        <begin position="437"/>
        <end position="454"/>
    </location>
</feature>
<feature type="compositionally biased region" description="Low complexity" evidence="4">
    <location>
        <begin position="466"/>
        <end position="477"/>
    </location>
</feature>
<feature type="compositionally biased region" description="Basic and acidic residues" evidence="4">
    <location>
        <begin position="562"/>
        <end position="571"/>
    </location>
</feature>
<feature type="compositionally biased region" description="Basic and acidic residues" evidence="4">
    <location>
        <begin position="598"/>
        <end position="612"/>
    </location>
</feature>
<feature type="modified residue" description="Phosphoserine" evidence="2">
    <location>
        <position position="157"/>
    </location>
</feature>
<feature type="modified residue" description="Phosphoserine" evidence="2">
    <location>
        <position position="216"/>
    </location>
</feature>
<feature type="modified residue" description="Phosphoserine" evidence="2">
    <location>
        <position position="220"/>
    </location>
</feature>
<feature type="modified residue" description="Phosphoserine" evidence="2">
    <location>
        <position position="452"/>
    </location>
</feature>
<feature type="modified residue" description="Phosphothreonine" evidence="2">
    <location>
        <position position="461"/>
    </location>
</feature>
<feature type="modified residue" description="Phosphoserine" evidence="2">
    <location>
        <position position="465"/>
    </location>
</feature>
<feature type="modified residue" description="Phosphoserine" evidence="2">
    <location>
        <position position="469"/>
    </location>
</feature>
<feature type="modified residue" description="Phosphoserine" evidence="2">
    <location>
        <position position="475"/>
    </location>
</feature>